<protein>
    <recommendedName>
        <fullName evidence="1">Bifunctional pantoate ligase/cytidylate kinase</fullName>
    </recommendedName>
    <domain>
        <recommendedName>
            <fullName evidence="1">Pantothenate synthetase</fullName>
            <shortName evidence="1">PS</shortName>
            <ecNumber evidence="1">6.3.2.1</ecNumber>
        </recommendedName>
        <alternativeName>
            <fullName evidence="1">Pantoate--beta-alanine ligase</fullName>
        </alternativeName>
        <alternativeName>
            <fullName evidence="1">Pantoate-activating enzyme</fullName>
        </alternativeName>
    </domain>
    <domain>
        <recommendedName>
            <fullName evidence="1">Cytidylate kinase</fullName>
            <shortName evidence="1">CK</shortName>
            <ecNumber evidence="1">2.7.4.25</ecNumber>
        </recommendedName>
        <alternativeName>
            <fullName evidence="1">Cytidine monophosphate kinase</fullName>
            <shortName evidence="1">CMP kinase</shortName>
        </alternativeName>
    </domain>
</protein>
<reference key="1">
    <citation type="journal article" date="2007" name="PLoS Genet.">
        <title>Patterns and implications of gene gain and loss in the evolution of Prochlorococcus.</title>
        <authorList>
            <person name="Kettler G.C."/>
            <person name="Martiny A.C."/>
            <person name="Huang K."/>
            <person name="Zucker J."/>
            <person name="Coleman M.L."/>
            <person name="Rodrigue S."/>
            <person name="Chen F."/>
            <person name="Lapidus A."/>
            <person name="Ferriera S."/>
            <person name="Johnson J."/>
            <person name="Steglich C."/>
            <person name="Church G.M."/>
            <person name="Richardson P."/>
            <person name="Chisholm S.W."/>
        </authorList>
    </citation>
    <scope>NUCLEOTIDE SEQUENCE [LARGE SCALE GENOMIC DNA]</scope>
    <source>
        <strain>AS9601</strain>
    </source>
</reference>
<organism>
    <name type="scientific">Prochlorococcus marinus (strain AS9601)</name>
    <dbReference type="NCBI Taxonomy" id="146891"/>
    <lineage>
        <taxon>Bacteria</taxon>
        <taxon>Bacillati</taxon>
        <taxon>Cyanobacteriota</taxon>
        <taxon>Cyanophyceae</taxon>
        <taxon>Synechococcales</taxon>
        <taxon>Prochlorococcaceae</taxon>
        <taxon>Prochlorococcus</taxon>
    </lineage>
</organism>
<accession>A2BTH1</accession>
<evidence type="ECO:0000255" key="1">
    <source>
        <dbReference type="HAMAP-Rule" id="MF_01349"/>
    </source>
</evidence>
<dbReference type="EC" id="6.3.2.1" evidence="1"/>
<dbReference type="EC" id="2.7.4.25" evidence="1"/>
<dbReference type="EMBL" id="CP000551">
    <property type="protein sequence ID" value="ABM71082.1"/>
    <property type="molecule type" value="Genomic_DNA"/>
</dbReference>
<dbReference type="RefSeq" id="WP_011819204.1">
    <property type="nucleotide sequence ID" value="NC_008816.1"/>
</dbReference>
<dbReference type="SMR" id="A2BTH1"/>
<dbReference type="STRING" id="146891.A9601_17991"/>
<dbReference type="KEGG" id="pmb:A9601_17991"/>
<dbReference type="eggNOG" id="COG0283">
    <property type="taxonomic scope" value="Bacteria"/>
</dbReference>
<dbReference type="eggNOG" id="COG0414">
    <property type="taxonomic scope" value="Bacteria"/>
</dbReference>
<dbReference type="HOGENOM" id="CLU_037427_0_0_3"/>
<dbReference type="OrthoDB" id="9773087at2"/>
<dbReference type="UniPathway" id="UPA00028">
    <property type="reaction ID" value="UER00005"/>
</dbReference>
<dbReference type="Proteomes" id="UP000002590">
    <property type="component" value="Chromosome"/>
</dbReference>
<dbReference type="GO" id="GO:0005829">
    <property type="term" value="C:cytosol"/>
    <property type="evidence" value="ECO:0007669"/>
    <property type="project" value="TreeGrafter"/>
</dbReference>
<dbReference type="GO" id="GO:0005524">
    <property type="term" value="F:ATP binding"/>
    <property type="evidence" value="ECO:0007669"/>
    <property type="project" value="UniProtKB-UniRule"/>
</dbReference>
<dbReference type="GO" id="GO:0036430">
    <property type="term" value="F:CMP kinase activity"/>
    <property type="evidence" value="ECO:0007669"/>
    <property type="project" value="RHEA"/>
</dbReference>
<dbReference type="GO" id="GO:0036431">
    <property type="term" value="F:dCMP kinase activity"/>
    <property type="evidence" value="ECO:0007669"/>
    <property type="project" value="RHEA"/>
</dbReference>
<dbReference type="GO" id="GO:0004592">
    <property type="term" value="F:pantoate-beta-alanine ligase activity"/>
    <property type="evidence" value="ECO:0007669"/>
    <property type="project" value="UniProtKB-UniRule"/>
</dbReference>
<dbReference type="GO" id="GO:0015949">
    <property type="term" value="P:nucleobase-containing small molecule interconversion"/>
    <property type="evidence" value="ECO:0007669"/>
    <property type="project" value="TreeGrafter"/>
</dbReference>
<dbReference type="GO" id="GO:0015940">
    <property type="term" value="P:pantothenate biosynthetic process"/>
    <property type="evidence" value="ECO:0007669"/>
    <property type="project" value="UniProtKB-UniRule"/>
</dbReference>
<dbReference type="GO" id="GO:0006220">
    <property type="term" value="P:pyrimidine nucleotide metabolic process"/>
    <property type="evidence" value="ECO:0007669"/>
    <property type="project" value="UniProtKB-UniRule"/>
</dbReference>
<dbReference type="CDD" id="cd02020">
    <property type="entry name" value="CMPK"/>
    <property type="match status" value="1"/>
</dbReference>
<dbReference type="Gene3D" id="3.40.50.620">
    <property type="entry name" value="HUPs"/>
    <property type="match status" value="1"/>
</dbReference>
<dbReference type="Gene3D" id="3.40.50.300">
    <property type="entry name" value="P-loop containing nucleotide triphosphate hydrolases"/>
    <property type="match status" value="1"/>
</dbReference>
<dbReference type="Gene3D" id="3.30.1300.10">
    <property type="entry name" value="Pantoate-beta-alanine ligase, C-terminal domain"/>
    <property type="match status" value="1"/>
</dbReference>
<dbReference type="HAMAP" id="MF_00238">
    <property type="entry name" value="Cytidyl_kinase_type1"/>
    <property type="match status" value="1"/>
</dbReference>
<dbReference type="HAMAP" id="MF_00158">
    <property type="entry name" value="PanC"/>
    <property type="match status" value="1"/>
</dbReference>
<dbReference type="HAMAP" id="MF_01349">
    <property type="entry name" value="PanCY"/>
    <property type="match status" value="1"/>
</dbReference>
<dbReference type="InterPro" id="IPR003136">
    <property type="entry name" value="Cytidylate_kin"/>
</dbReference>
<dbReference type="InterPro" id="IPR011994">
    <property type="entry name" value="Cytidylate_kinase_dom"/>
</dbReference>
<dbReference type="InterPro" id="IPR027417">
    <property type="entry name" value="P-loop_NTPase"/>
</dbReference>
<dbReference type="InterPro" id="IPR003721">
    <property type="entry name" value="Pantoate_ligase"/>
</dbReference>
<dbReference type="InterPro" id="IPR024894">
    <property type="entry name" value="Pantoate_ligase/cytidylate_kin"/>
</dbReference>
<dbReference type="InterPro" id="IPR042176">
    <property type="entry name" value="Pantoate_ligase_C"/>
</dbReference>
<dbReference type="InterPro" id="IPR014729">
    <property type="entry name" value="Rossmann-like_a/b/a_fold"/>
</dbReference>
<dbReference type="NCBIfam" id="TIGR00017">
    <property type="entry name" value="cmk"/>
    <property type="match status" value="1"/>
</dbReference>
<dbReference type="NCBIfam" id="TIGR00018">
    <property type="entry name" value="panC"/>
    <property type="match status" value="1"/>
</dbReference>
<dbReference type="NCBIfam" id="NF010004">
    <property type="entry name" value="PRK13477.1"/>
    <property type="match status" value="1"/>
</dbReference>
<dbReference type="PANTHER" id="PTHR21299:SF2">
    <property type="entry name" value="CYTIDYLATE KINASE"/>
    <property type="match status" value="1"/>
</dbReference>
<dbReference type="PANTHER" id="PTHR21299">
    <property type="entry name" value="CYTIDYLATE KINASE/PANTOATE-BETA-ALANINE LIGASE"/>
    <property type="match status" value="1"/>
</dbReference>
<dbReference type="Pfam" id="PF02224">
    <property type="entry name" value="Cytidylate_kin"/>
    <property type="match status" value="1"/>
</dbReference>
<dbReference type="Pfam" id="PF02569">
    <property type="entry name" value="Pantoate_ligase"/>
    <property type="match status" value="1"/>
</dbReference>
<dbReference type="SUPFAM" id="SSF52374">
    <property type="entry name" value="Nucleotidylyl transferase"/>
    <property type="match status" value="1"/>
</dbReference>
<dbReference type="SUPFAM" id="SSF52540">
    <property type="entry name" value="P-loop containing nucleoside triphosphate hydrolases"/>
    <property type="match status" value="1"/>
</dbReference>
<proteinExistence type="inferred from homology"/>
<sequence length="509" mass="58242">MKKLIIRKTEEIENWRKDIDSEINFIPTMGNLHDGHIKLISTAKNDNSNINLVSIFINPLQFDNKLDLENYPKTIDNDINISFSNGADAIFIPSNEDIYPPNNNISFLKAPIELSSALCGLNRIGHFDGVCTVVYRLLNLIKPKNLYLGEKDWQQLLILKNLVLRKKLNIAIKSIPTQRDFDGIPLSSRNVHLSKNERKLISFFSRELLEAKKNFQKEKKINLKEIIKKLSEKKISIEYLEHLHPYTLQKAKIEDNISLLAGAIRCGETRLIDHVFLMKRRPIIAIDGPAGSGKSTVTKLIAKKLKLLYLDTGAMYRALSWLIIKENIDFKKENKLQNILKDISIVFKSNTSSHQDVYVNNYCVTEEIRSQKISSIVSKISSIKEVREFLVEEQRKIGESGGLVAEGRDIGTTVFPHAELKIFLTASIDERAKRRKSDKNSKDLQEIDLHKLKELIKQRDSEDSNRKISPLIKANDAIEIITDGYSINEVVDKIIDLYNDKIPKESEIK</sequence>
<gene>
    <name evidence="1" type="primary">panC/cmk</name>
    <name type="ordered locus">A9601_17991</name>
</gene>
<comment type="function">
    <text evidence="1">Catalyzes the condensation of pantoate with beta-alanine in an ATP-dependent reaction via a pantoyl-adenylate intermediate.</text>
</comment>
<comment type="function">
    <text evidence="1">Catalyzes the transfer of a phosphate group from ATP to either CMP or dCMP to form CDP or dCDP and ADP, respectively.</text>
</comment>
<comment type="catalytic activity">
    <reaction evidence="1">
        <text>(R)-pantoate + beta-alanine + ATP = (R)-pantothenate + AMP + diphosphate + H(+)</text>
        <dbReference type="Rhea" id="RHEA:10912"/>
        <dbReference type="ChEBI" id="CHEBI:15378"/>
        <dbReference type="ChEBI" id="CHEBI:15980"/>
        <dbReference type="ChEBI" id="CHEBI:29032"/>
        <dbReference type="ChEBI" id="CHEBI:30616"/>
        <dbReference type="ChEBI" id="CHEBI:33019"/>
        <dbReference type="ChEBI" id="CHEBI:57966"/>
        <dbReference type="ChEBI" id="CHEBI:456215"/>
        <dbReference type="EC" id="6.3.2.1"/>
    </reaction>
</comment>
<comment type="catalytic activity">
    <reaction evidence="1">
        <text>CMP + ATP = CDP + ADP</text>
        <dbReference type="Rhea" id="RHEA:11600"/>
        <dbReference type="ChEBI" id="CHEBI:30616"/>
        <dbReference type="ChEBI" id="CHEBI:58069"/>
        <dbReference type="ChEBI" id="CHEBI:60377"/>
        <dbReference type="ChEBI" id="CHEBI:456216"/>
        <dbReference type="EC" id="2.7.4.25"/>
    </reaction>
</comment>
<comment type="catalytic activity">
    <reaction evidence="1">
        <text>dCMP + ATP = dCDP + ADP</text>
        <dbReference type="Rhea" id="RHEA:25094"/>
        <dbReference type="ChEBI" id="CHEBI:30616"/>
        <dbReference type="ChEBI" id="CHEBI:57566"/>
        <dbReference type="ChEBI" id="CHEBI:58593"/>
        <dbReference type="ChEBI" id="CHEBI:456216"/>
        <dbReference type="EC" id="2.7.4.25"/>
    </reaction>
</comment>
<comment type="pathway">
    <text evidence="1">Cofactor biosynthesis; (R)-pantothenate biosynthesis; (R)-pantothenate from (R)-pantoate and beta-alanine: step 1/1.</text>
</comment>
<comment type="subcellular location">
    <subcellularLocation>
        <location evidence="1">Cytoplasm</location>
    </subcellularLocation>
</comment>
<comment type="similarity">
    <text evidence="1">In the N-terminal section; belongs to the pantothenate synthetase family.</text>
</comment>
<comment type="similarity">
    <text evidence="1">In the C-terminal section; belongs to the cytidylate kinase family. Type 1 subfamily.</text>
</comment>
<keyword id="KW-0067">ATP-binding</keyword>
<keyword id="KW-0963">Cytoplasm</keyword>
<keyword id="KW-0418">Kinase</keyword>
<keyword id="KW-0436">Ligase</keyword>
<keyword id="KW-0511">Multifunctional enzyme</keyword>
<keyword id="KW-0547">Nucleotide-binding</keyword>
<keyword id="KW-0566">Pantothenate biosynthesis</keyword>
<keyword id="KW-0808">Transferase</keyword>
<name>PANCY_PROMS</name>
<feature type="chain" id="PRO_0000333295" description="Bifunctional pantoate ligase/cytidylate kinase">
    <location>
        <begin position="1"/>
        <end position="509"/>
    </location>
</feature>
<feature type="region of interest" description="Pantoate--beta-alanine ligase">
    <location>
        <begin position="1"/>
        <end position="275"/>
    </location>
</feature>
<feature type="region of interest" description="Cytidylate kinase" evidence="1">
    <location>
        <begin position="276"/>
        <end position="509"/>
    </location>
</feature>
<feature type="active site" description="Proton donor" evidence="1">
    <location>
        <position position="36"/>
    </location>
</feature>
<feature type="binding site" evidence="1">
    <location>
        <begin position="29"/>
        <end position="36"/>
    </location>
    <ligand>
        <name>ATP</name>
        <dbReference type="ChEBI" id="CHEBI:30616"/>
    </ligand>
</feature>
<feature type="binding site" evidence="1">
    <location>
        <position position="61"/>
    </location>
    <ligand>
        <name>(R)-pantoate</name>
        <dbReference type="ChEBI" id="CHEBI:15980"/>
    </ligand>
</feature>
<feature type="binding site" evidence="1">
    <location>
        <position position="61"/>
    </location>
    <ligand>
        <name>beta-alanine</name>
        <dbReference type="ChEBI" id="CHEBI:57966"/>
    </ligand>
</feature>
<feature type="binding site" evidence="1">
    <location>
        <begin position="149"/>
        <end position="152"/>
    </location>
    <ligand>
        <name>ATP</name>
        <dbReference type="ChEBI" id="CHEBI:30616"/>
    </ligand>
</feature>
<feature type="binding site" evidence="1">
    <location>
        <position position="155"/>
    </location>
    <ligand>
        <name>(R)-pantoate</name>
        <dbReference type="ChEBI" id="CHEBI:15980"/>
    </ligand>
</feature>
<feature type="binding site" evidence="1">
    <location>
        <begin position="186"/>
        <end position="189"/>
    </location>
    <ligand>
        <name>ATP</name>
        <dbReference type="ChEBI" id="CHEBI:30616"/>
    </ligand>
</feature>